<name>Y1129_BACHK</name>
<accession>Q6HLV6</accession>
<gene>
    <name type="ordered locus">BT9727_1129</name>
</gene>
<comment type="similarity">
    <text evidence="1">Belongs to the 2H phosphoesterase superfamily. YjcG family.</text>
</comment>
<sequence length="172" mass="19878">MKLGIVIFPSKMIQDKANGLRKRYDPHYALVPPHITLKTPFETQDEQLESIVNELHTIASKTNPFTLHVGKVGSFAPVNNVIYFKVEKTPELTFLNEEMHSGFFTQEREYAFVPHLTIGQGLSDAEHADVLGRLRMKDFYYEQPIDRFHLLYQLENGTWTVHETFRLGKGNN</sequence>
<reference key="1">
    <citation type="journal article" date="2006" name="J. Bacteriol.">
        <title>Pathogenomic sequence analysis of Bacillus cereus and Bacillus thuringiensis isolates closely related to Bacillus anthracis.</title>
        <authorList>
            <person name="Han C.S."/>
            <person name="Xie G."/>
            <person name="Challacombe J.F."/>
            <person name="Altherr M.R."/>
            <person name="Bhotika S.S."/>
            <person name="Bruce D."/>
            <person name="Campbell C.S."/>
            <person name="Campbell M.L."/>
            <person name="Chen J."/>
            <person name="Chertkov O."/>
            <person name="Cleland C."/>
            <person name="Dimitrijevic M."/>
            <person name="Doggett N.A."/>
            <person name="Fawcett J.J."/>
            <person name="Glavina T."/>
            <person name="Goodwin L.A."/>
            <person name="Hill K.K."/>
            <person name="Hitchcock P."/>
            <person name="Jackson P.J."/>
            <person name="Keim P."/>
            <person name="Kewalramani A.R."/>
            <person name="Longmire J."/>
            <person name="Lucas S."/>
            <person name="Malfatti S."/>
            <person name="McMurry K."/>
            <person name="Meincke L.J."/>
            <person name="Misra M."/>
            <person name="Moseman B.L."/>
            <person name="Mundt M."/>
            <person name="Munk A.C."/>
            <person name="Okinaka R.T."/>
            <person name="Parson-Quintana B."/>
            <person name="Reilly L.P."/>
            <person name="Richardson P."/>
            <person name="Robinson D.L."/>
            <person name="Rubin E."/>
            <person name="Saunders E."/>
            <person name="Tapia R."/>
            <person name="Tesmer J.G."/>
            <person name="Thayer N."/>
            <person name="Thompson L.S."/>
            <person name="Tice H."/>
            <person name="Ticknor L.O."/>
            <person name="Wills P.L."/>
            <person name="Brettin T.S."/>
            <person name="Gilna P."/>
        </authorList>
    </citation>
    <scope>NUCLEOTIDE SEQUENCE [LARGE SCALE GENOMIC DNA]</scope>
    <source>
        <strain>97-27</strain>
    </source>
</reference>
<organism>
    <name type="scientific">Bacillus thuringiensis subsp. konkukian (strain 97-27)</name>
    <dbReference type="NCBI Taxonomy" id="281309"/>
    <lineage>
        <taxon>Bacteria</taxon>
        <taxon>Bacillati</taxon>
        <taxon>Bacillota</taxon>
        <taxon>Bacilli</taxon>
        <taxon>Bacillales</taxon>
        <taxon>Bacillaceae</taxon>
        <taxon>Bacillus</taxon>
        <taxon>Bacillus cereus group</taxon>
    </lineage>
</organism>
<keyword id="KW-0378">Hydrolase</keyword>
<feature type="chain" id="PRO_0000299333" description="Putative phosphoesterase BT9727_1129">
    <location>
        <begin position="1"/>
        <end position="172"/>
    </location>
</feature>
<feature type="short sequence motif" description="HXTX 1" evidence="1">
    <location>
        <begin position="34"/>
        <end position="37"/>
    </location>
</feature>
<feature type="short sequence motif" description="HXTX 2" evidence="1">
    <location>
        <begin position="115"/>
        <end position="118"/>
    </location>
</feature>
<feature type="active site" description="Proton donor" evidence="1">
    <location>
        <position position="34"/>
    </location>
</feature>
<feature type="active site" description="Proton acceptor" evidence="1">
    <location>
        <position position="115"/>
    </location>
</feature>
<dbReference type="EC" id="3.1.-.-" evidence="1"/>
<dbReference type="EMBL" id="AE017355">
    <property type="protein sequence ID" value="AAT62699.1"/>
    <property type="molecule type" value="Genomic_DNA"/>
</dbReference>
<dbReference type="RefSeq" id="WP_000765876.1">
    <property type="nucleotide sequence ID" value="NC_005957.1"/>
</dbReference>
<dbReference type="RefSeq" id="YP_035465.1">
    <property type="nucleotide sequence ID" value="NC_005957.1"/>
</dbReference>
<dbReference type="SMR" id="Q6HLV6"/>
<dbReference type="KEGG" id="btk:BT9727_1129"/>
<dbReference type="PATRIC" id="fig|281309.8.peg.1188"/>
<dbReference type="HOGENOM" id="CLU_132020_0_0_9"/>
<dbReference type="Proteomes" id="UP000001301">
    <property type="component" value="Chromosome"/>
</dbReference>
<dbReference type="GO" id="GO:0016788">
    <property type="term" value="F:hydrolase activity, acting on ester bonds"/>
    <property type="evidence" value="ECO:0007669"/>
    <property type="project" value="UniProtKB-UniRule"/>
</dbReference>
<dbReference type="Gene3D" id="3.90.1140.10">
    <property type="entry name" value="Cyclic phosphodiesterase"/>
    <property type="match status" value="1"/>
</dbReference>
<dbReference type="HAMAP" id="MF_01444">
    <property type="entry name" value="2H_phosphoesterase_YjcG"/>
    <property type="match status" value="1"/>
</dbReference>
<dbReference type="InterPro" id="IPR050580">
    <property type="entry name" value="2H_phosphoesterase_YjcG-like"/>
</dbReference>
<dbReference type="InterPro" id="IPR009097">
    <property type="entry name" value="Cyclic_Pdiesterase"/>
</dbReference>
<dbReference type="InterPro" id="IPR022932">
    <property type="entry name" value="YjcG"/>
</dbReference>
<dbReference type="NCBIfam" id="NF010223">
    <property type="entry name" value="PRK13679.1"/>
    <property type="match status" value="1"/>
</dbReference>
<dbReference type="PANTHER" id="PTHR40037:SF1">
    <property type="entry name" value="PHOSPHOESTERASE SAOUHSC_00951-RELATED"/>
    <property type="match status" value="1"/>
</dbReference>
<dbReference type="PANTHER" id="PTHR40037">
    <property type="entry name" value="PHOSPHOESTERASE YJCG-RELATED"/>
    <property type="match status" value="1"/>
</dbReference>
<dbReference type="Pfam" id="PF13563">
    <property type="entry name" value="2_5_RNA_ligase2"/>
    <property type="match status" value="1"/>
</dbReference>
<dbReference type="SUPFAM" id="SSF55144">
    <property type="entry name" value="LigT-like"/>
    <property type="match status" value="1"/>
</dbReference>
<proteinExistence type="inferred from homology"/>
<evidence type="ECO:0000255" key="1">
    <source>
        <dbReference type="HAMAP-Rule" id="MF_01444"/>
    </source>
</evidence>
<protein>
    <recommendedName>
        <fullName evidence="1">Putative phosphoesterase BT9727_1129</fullName>
        <ecNumber evidence="1">3.1.-.-</ecNumber>
    </recommendedName>
</protein>